<reference key="1">
    <citation type="journal article" date="2003" name="Proc. Natl. Acad. Sci. U.S.A.">
        <title>Complete genome sequence of the marine planctomycete Pirellula sp. strain 1.</title>
        <authorList>
            <person name="Gloeckner F.O."/>
            <person name="Kube M."/>
            <person name="Bauer M."/>
            <person name="Teeling H."/>
            <person name="Lombardot T."/>
            <person name="Ludwig W."/>
            <person name="Gade D."/>
            <person name="Beck A."/>
            <person name="Borzym K."/>
            <person name="Heitmann K."/>
            <person name="Rabus R."/>
            <person name="Schlesner H."/>
            <person name="Amann R."/>
            <person name="Reinhardt R."/>
        </authorList>
    </citation>
    <scope>NUCLEOTIDE SEQUENCE [LARGE SCALE GENOMIC DNA]</scope>
    <source>
        <strain>DSM 10527 / NCIMB 13988 / SH1</strain>
    </source>
</reference>
<keyword id="KW-0004">4Fe-4S</keyword>
<keyword id="KW-0408">Iron</keyword>
<keyword id="KW-0411">Iron-sulfur</keyword>
<keyword id="KW-0456">Lyase</keyword>
<keyword id="KW-0460">Magnesium</keyword>
<keyword id="KW-0479">Metal-binding</keyword>
<keyword id="KW-0671">Queuosine biosynthesis</keyword>
<keyword id="KW-1185">Reference proteome</keyword>
<keyword id="KW-0949">S-adenosyl-L-methionine</keyword>
<feature type="chain" id="PRO_0000416211" description="7-carboxy-7-deazaguanine synthase">
    <location>
        <begin position="1"/>
        <end position="257"/>
    </location>
</feature>
<feature type="domain" description="Radical SAM core" evidence="2">
    <location>
        <begin position="45"/>
        <end position="244"/>
    </location>
</feature>
<feature type="region of interest" description="Disordered" evidence="3">
    <location>
        <begin position="1"/>
        <end position="25"/>
    </location>
</feature>
<feature type="binding site" evidence="1">
    <location>
        <begin position="39"/>
        <end position="41"/>
    </location>
    <ligand>
        <name>substrate</name>
    </ligand>
</feature>
<feature type="binding site" evidence="1">
    <location>
        <position position="54"/>
    </location>
    <ligand>
        <name>substrate</name>
    </ligand>
</feature>
<feature type="binding site" evidence="1">
    <location>
        <position position="58"/>
    </location>
    <ligand>
        <name>[4Fe-4S] cluster</name>
        <dbReference type="ChEBI" id="CHEBI:49883"/>
        <note>4Fe-4S-S-AdoMet</note>
    </ligand>
</feature>
<feature type="binding site" evidence="1">
    <location>
        <position position="62"/>
    </location>
    <ligand>
        <name>[4Fe-4S] cluster</name>
        <dbReference type="ChEBI" id="CHEBI:49883"/>
        <note>4Fe-4S-S-AdoMet</note>
    </ligand>
</feature>
<feature type="binding site" evidence="1">
    <location>
        <position position="65"/>
    </location>
    <ligand>
        <name>[4Fe-4S] cluster</name>
        <dbReference type="ChEBI" id="CHEBI:49883"/>
        <note>4Fe-4S-S-AdoMet</note>
    </ligand>
</feature>
<feature type="binding site" evidence="1">
    <location>
        <position position="67"/>
    </location>
    <ligand>
        <name>Mg(2+)</name>
        <dbReference type="ChEBI" id="CHEBI:18420"/>
    </ligand>
</feature>
<feature type="binding site" evidence="1">
    <location>
        <position position="99"/>
    </location>
    <ligand>
        <name>substrate</name>
    </ligand>
</feature>
<feature type="binding site" evidence="1">
    <location>
        <position position="101"/>
    </location>
    <ligand>
        <name>S-adenosyl-L-methionine</name>
        <dbReference type="ChEBI" id="CHEBI:59789"/>
    </ligand>
</feature>
<feature type="binding site" evidence="1">
    <location>
        <begin position="143"/>
        <end position="145"/>
    </location>
    <ligand>
        <name>S-adenosyl-L-methionine</name>
        <dbReference type="ChEBI" id="CHEBI:59789"/>
    </ligand>
</feature>
<name>QUEE_RHOBA</name>
<comment type="function">
    <text evidence="1">Catalyzes the complex heterocyclic radical-mediated conversion of 6-carboxy-5,6,7,8-tetrahydropterin (CPH4) to 7-carboxy-7-deazaguanine (CDG), a step common to the biosynthetic pathways of all 7-deazapurine-containing compounds.</text>
</comment>
<comment type="catalytic activity">
    <reaction evidence="1">
        <text>6-carboxy-5,6,7,8-tetrahydropterin + H(+) = 7-carboxy-7-deazaguanine + NH4(+)</text>
        <dbReference type="Rhea" id="RHEA:27974"/>
        <dbReference type="ChEBI" id="CHEBI:15378"/>
        <dbReference type="ChEBI" id="CHEBI:28938"/>
        <dbReference type="ChEBI" id="CHEBI:61032"/>
        <dbReference type="ChEBI" id="CHEBI:61036"/>
        <dbReference type="EC" id="4.3.99.3"/>
    </reaction>
</comment>
<comment type="cofactor">
    <cofactor evidence="1">
        <name>[4Fe-4S] cluster</name>
        <dbReference type="ChEBI" id="CHEBI:49883"/>
    </cofactor>
    <text evidence="1">Binds 1 [4Fe-4S] cluster. The cluster is coordinated with 3 cysteines and an exchangeable S-adenosyl-L-methionine.</text>
</comment>
<comment type="cofactor">
    <cofactor evidence="1">
        <name>S-adenosyl-L-methionine</name>
        <dbReference type="ChEBI" id="CHEBI:59789"/>
    </cofactor>
    <text evidence="1">Binds 1 S-adenosyl-L-methionine per subunit.</text>
</comment>
<comment type="cofactor">
    <cofactor evidence="1">
        <name>Mg(2+)</name>
        <dbReference type="ChEBI" id="CHEBI:18420"/>
    </cofactor>
</comment>
<comment type="pathway">
    <text evidence="1">Purine metabolism; 7-cyano-7-deazaguanine biosynthesis.</text>
</comment>
<comment type="subunit">
    <text evidence="1">Homodimer.</text>
</comment>
<comment type="similarity">
    <text evidence="1">Belongs to the radical SAM superfamily. 7-carboxy-7-deazaguanine synthase family.</text>
</comment>
<protein>
    <recommendedName>
        <fullName evidence="1">7-carboxy-7-deazaguanine synthase</fullName>
        <shortName evidence="1">CDG synthase</shortName>
        <ecNumber evidence="1">4.3.99.3</ecNumber>
    </recommendedName>
    <alternativeName>
        <fullName evidence="1">Queuosine biosynthesis protein QueE</fullName>
    </alternativeName>
</protein>
<gene>
    <name evidence="1" type="primary">queE</name>
    <name type="ordered locus">RB2645</name>
</gene>
<evidence type="ECO:0000255" key="1">
    <source>
        <dbReference type="HAMAP-Rule" id="MF_00917"/>
    </source>
</evidence>
<evidence type="ECO:0000255" key="2">
    <source>
        <dbReference type="PROSITE-ProRule" id="PRU01266"/>
    </source>
</evidence>
<evidence type="ECO:0000256" key="3">
    <source>
        <dbReference type="SAM" id="MobiDB-lite"/>
    </source>
</evidence>
<dbReference type="EC" id="4.3.99.3" evidence="1"/>
<dbReference type="EMBL" id="BX294137">
    <property type="protein sequence ID" value="CAD72756.1"/>
    <property type="molecule type" value="Genomic_DNA"/>
</dbReference>
<dbReference type="RefSeq" id="NP_865072.1">
    <property type="nucleotide sequence ID" value="NC_005027.1"/>
</dbReference>
<dbReference type="SMR" id="Q7UVG8"/>
<dbReference type="STRING" id="243090.RB2645"/>
<dbReference type="EnsemblBacteria" id="CAD72756">
    <property type="protein sequence ID" value="CAD72756"/>
    <property type="gene ID" value="RB2645"/>
</dbReference>
<dbReference type="KEGG" id="rba:RB2645"/>
<dbReference type="PATRIC" id="fig|243090.15.peg.1214"/>
<dbReference type="eggNOG" id="COG0602">
    <property type="taxonomic scope" value="Bacteria"/>
</dbReference>
<dbReference type="HOGENOM" id="CLU_066739_2_1_0"/>
<dbReference type="InParanoid" id="Q7UVG8"/>
<dbReference type="OrthoDB" id="9792276at2"/>
<dbReference type="UniPathway" id="UPA00391"/>
<dbReference type="Proteomes" id="UP000001025">
    <property type="component" value="Chromosome"/>
</dbReference>
<dbReference type="GO" id="GO:0051539">
    <property type="term" value="F:4 iron, 4 sulfur cluster binding"/>
    <property type="evidence" value="ECO:0007669"/>
    <property type="project" value="UniProtKB-UniRule"/>
</dbReference>
<dbReference type="GO" id="GO:0016840">
    <property type="term" value="F:carbon-nitrogen lyase activity"/>
    <property type="evidence" value="ECO:0007669"/>
    <property type="project" value="UniProtKB-UniRule"/>
</dbReference>
<dbReference type="GO" id="GO:0000287">
    <property type="term" value="F:magnesium ion binding"/>
    <property type="evidence" value="ECO:0007669"/>
    <property type="project" value="UniProtKB-UniRule"/>
</dbReference>
<dbReference type="GO" id="GO:1904047">
    <property type="term" value="F:S-adenosyl-L-methionine binding"/>
    <property type="evidence" value="ECO:0007669"/>
    <property type="project" value="UniProtKB-UniRule"/>
</dbReference>
<dbReference type="GO" id="GO:0008616">
    <property type="term" value="P:queuosine biosynthetic process"/>
    <property type="evidence" value="ECO:0007669"/>
    <property type="project" value="UniProtKB-UniRule"/>
</dbReference>
<dbReference type="CDD" id="cd01335">
    <property type="entry name" value="Radical_SAM"/>
    <property type="match status" value="1"/>
</dbReference>
<dbReference type="Gene3D" id="3.20.20.70">
    <property type="entry name" value="Aldolase class I"/>
    <property type="match status" value="1"/>
</dbReference>
<dbReference type="HAMAP" id="MF_00917">
    <property type="entry name" value="QueE"/>
    <property type="match status" value="1"/>
</dbReference>
<dbReference type="InterPro" id="IPR024924">
    <property type="entry name" value="7-CO-7-deazaguanine_synth-like"/>
</dbReference>
<dbReference type="InterPro" id="IPR013785">
    <property type="entry name" value="Aldolase_TIM"/>
</dbReference>
<dbReference type="InterPro" id="IPR007197">
    <property type="entry name" value="rSAM"/>
</dbReference>
<dbReference type="PANTHER" id="PTHR42836">
    <property type="entry name" value="7-CARBOXY-7-DEAZAGUANINE SYNTHASE"/>
    <property type="match status" value="1"/>
</dbReference>
<dbReference type="PANTHER" id="PTHR42836:SF1">
    <property type="entry name" value="7-CARBOXY-7-DEAZAGUANINE SYNTHASE"/>
    <property type="match status" value="1"/>
</dbReference>
<dbReference type="Pfam" id="PF13353">
    <property type="entry name" value="Fer4_12"/>
    <property type="match status" value="1"/>
</dbReference>
<dbReference type="Pfam" id="PF04055">
    <property type="entry name" value="Radical_SAM"/>
    <property type="match status" value="1"/>
</dbReference>
<dbReference type="SFLD" id="SFLDS00029">
    <property type="entry name" value="Radical_SAM"/>
    <property type="match status" value="1"/>
</dbReference>
<dbReference type="SFLD" id="SFLDG01067">
    <property type="entry name" value="SPASM/twitch_domain_containing"/>
    <property type="match status" value="1"/>
</dbReference>
<dbReference type="SUPFAM" id="SSF102114">
    <property type="entry name" value="Radical SAM enzymes"/>
    <property type="match status" value="1"/>
</dbReference>
<dbReference type="PROSITE" id="PS51918">
    <property type="entry name" value="RADICAL_SAM"/>
    <property type="match status" value="1"/>
</dbReference>
<proteinExistence type="inferred from homology"/>
<accession>Q7UVG8</accession>
<sequence>MKSVDHPVDVLPAEHSAETPGDARASESSLLISETFVSRQGEGELTGTESVFIRTSGCNLRCWFCDTPYASWKPEGTRQTIEDLLQLVAKSGVKHVVLTGGEPLIAKGIVSLIDQLRSAGNHVTIETAGTVDPGARCDLLSLSPKLRASTPDAKDHPRLAKMHAERRLPINTMKQLIQSAEATQVKFVVDSADELPEIDEVVRQLEIAADAVYLMPQGISVEQLDAARPWLEPMAISRGYQYCDRMQIRWFGNRRGT</sequence>
<organism>
    <name type="scientific">Rhodopirellula baltica (strain DSM 10527 / NCIMB 13988 / SH1)</name>
    <dbReference type="NCBI Taxonomy" id="243090"/>
    <lineage>
        <taxon>Bacteria</taxon>
        <taxon>Pseudomonadati</taxon>
        <taxon>Planctomycetota</taxon>
        <taxon>Planctomycetia</taxon>
        <taxon>Pirellulales</taxon>
        <taxon>Pirellulaceae</taxon>
        <taxon>Rhodopirellula</taxon>
    </lineage>
</organism>